<reference key="1">
    <citation type="journal article" date="2010" name="J. Bacteriol.">
        <title>Genome sequence of the dioxin-mineralizing bacterium Sphingomonas wittichii RW1.</title>
        <authorList>
            <person name="Miller T.R."/>
            <person name="Delcher A.L."/>
            <person name="Salzberg S.L."/>
            <person name="Saunders E."/>
            <person name="Detter J.C."/>
            <person name="Halden R.U."/>
        </authorList>
    </citation>
    <scope>NUCLEOTIDE SEQUENCE [LARGE SCALE GENOMIC DNA]</scope>
    <source>
        <strain>DSM 6014 / CCUG 31198 / JCM 15750 / NBRC 105917 / EY 4224 / RW1</strain>
    </source>
</reference>
<feature type="chain" id="PRO_1000051954" description="Large ribosomal subunit protein uL2">
    <location>
        <begin position="1"/>
        <end position="278"/>
    </location>
</feature>
<feature type="region of interest" description="Disordered" evidence="2">
    <location>
        <begin position="28"/>
        <end position="56"/>
    </location>
</feature>
<feature type="region of interest" description="Disordered" evidence="2">
    <location>
        <begin position="221"/>
        <end position="278"/>
    </location>
</feature>
<feature type="compositionally biased region" description="Basic residues" evidence="2">
    <location>
        <begin position="269"/>
        <end position="278"/>
    </location>
</feature>
<organism>
    <name type="scientific">Rhizorhabdus wittichii (strain DSM 6014 / CCUG 31198 / JCM 15750 / NBRC 105917 / EY 4224 / RW1)</name>
    <name type="common">Sphingomonas wittichii</name>
    <dbReference type="NCBI Taxonomy" id="392499"/>
    <lineage>
        <taxon>Bacteria</taxon>
        <taxon>Pseudomonadati</taxon>
        <taxon>Pseudomonadota</taxon>
        <taxon>Alphaproteobacteria</taxon>
        <taxon>Sphingomonadales</taxon>
        <taxon>Sphingomonadaceae</taxon>
        <taxon>Rhizorhabdus</taxon>
    </lineage>
</organism>
<proteinExistence type="inferred from homology"/>
<protein>
    <recommendedName>
        <fullName evidence="1">Large ribosomal subunit protein uL2</fullName>
    </recommendedName>
    <alternativeName>
        <fullName evidence="3">50S ribosomal protein L2</fullName>
    </alternativeName>
</protein>
<gene>
    <name evidence="1" type="primary">rplB</name>
    <name type="ordered locus">Swit_1350</name>
</gene>
<comment type="function">
    <text evidence="1">One of the primary rRNA binding proteins. Required for association of the 30S and 50S subunits to form the 70S ribosome, for tRNA binding and peptide bond formation. It has been suggested to have peptidyltransferase activity; this is somewhat controversial. Makes several contacts with the 16S rRNA in the 70S ribosome.</text>
</comment>
<comment type="subunit">
    <text evidence="1">Part of the 50S ribosomal subunit. Forms a bridge to the 30S subunit in the 70S ribosome.</text>
</comment>
<comment type="similarity">
    <text evidence="1">Belongs to the universal ribosomal protein uL2 family.</text>
</comment>
<keyword id="KW-1185">Reference proteome</keyword>
<keyword id="KW-0687">Ribonucleoprotein</keyword>
<keyword id="KW-0689">Ribosomal protein</keyword>
<keyword id="KW-0694">RNA-binding</keyword>
<keyword id="KW-0699">rRNA-binding</keyword>
<dbReference type="EMBL" id="CP000699">
    <property type="protein sequence ID" value="ABQ67715.1"/>
    <property type="molecule type" value="Genomic_DNA"/>
</dbReference>
<dbReference type="SMR" id="A5V5Z9"/>
<dbReference type="STRING" id="392499.Swit_1350"/>
<dbReference type="PaxDb" id="392499-Swit_1350"/>
<dbReference type="KEGG" id="swi:Swit_1350"/>
<dbReference type="eggNOG" id="COG0090">
    <property type="taxonomic scope" value="Bacteria"/>
</dbReference>
<dbReference type="HOGENOM" id="CLU_036235_2_1_5"/>
<dbReference type="OrthoDB" id="9778722at2"/>
<dbReference type="Proteomes" id="UP000001989">
    <property type="component" value="Chromosome"/>
</dbReference>
<dbReference type="GO" id="GO:0015934">
    <property type="term" value="C:large ribosomal subunit"/>
    <property type="evidence" value="ECO:0007669"/>
    <property type="project" value="InterPro"/>
</dbReference>
<dbReference type="GO" id="GO:0019843">
    <property type="term" value="F:rRNA binding"/>
    <property type="evidence" value="ECO:0007669"/>
    <property type="project" value="UniProtKB-UniRule"/>
</dbReference>
<dbReference type="GO" id="GO:0003735">
    <property type="term" value="F:structural constituent of ribosome"/>
    <property type="evidence" value="ECO:0007669"/>
    <property type="project" value="InterPro"/>
</dbReference>
<dbReference type="GO" id="GO:0016740">
    <property type="term" value="F:transferase activity"/>
    <property type="evidence" value="ECO:0007669"/>
    <property type="project" value="InterPro"/>
</dbReference>
<dbReference type="GO" id="GO:0002181">
    <property type="term" value="P:cytoplasmic translation"/>
    <property type="evidence" value="ECO:0007669"/>
    <property type="project" value="TreeGrafter"/>
</dbReference>
<dbReference type="FunFam" id="2.30.30.30:FF:000001">
    <property type="entry name" value="50S ribosomal protein L2"/>
    <property type="match status" value="1"/>
</dbReference>
<dbReference type="FunFam" id="4.10.950.10:FF:000001">
    <property type="entry name" value="50S ribosomal protein L2"/>
    <property type="match status" value="1"/>
</dbReference>
<dbReference type="Gene3D" id="2.30.30.30">
    <property type="match status" value="1"/>
</dbReference>
<dbReference type="Gene3D" id="2.40.50.140">
    <property type="entry name" value="Nucleic acid-binding proteins"/>
    <property type="match status" value="1"/>
</dbReference>
<dbReference type="Gene3D" id="4.10.950.10">
    <property type="entry name" value="Ribosomal protein L2, domain 3"/>
    <property type="match status" value="1"/>
</dbReference>
<dbReference type="HAMAP" id="MF_01320_B">
    <property type="entry name" value="Ribosomal_uL2_B"/>
    <property type="match status" value="1"/>
</dbReference>
<dbReference type="InterPro" id="IPR012340">
    <property type="entry name" value="NA-bd_OB-fold"/>
</dbReference>
<dbReference type="InterPro" id="IPR014722">
    <property type="entry name" value="Rib_uL2_dom2"/>
</dbReference>
<dbReference type="InterPro" id="IPR002171">
    <property type="entry name" value="Ribosomal_uL2"/>
</dbReference>
<dbReference type="InterPro" id="IPR005880">
    <property type="entry name" value="Ribosomal_uL2_bac/org-type"/>
</dbReference>
<dbReference type="InterPro" id="IPR022669">
    <property type="entry name" value="Ribosomal_uL2_C"/>
</dbReference>
<dbReference type="InterPro" id="IPR022671">
    <property type="entry name" value="Ribosomal_uL2_CS"/>
</dbReference>
<dbReference type="InterPro" id="IPR014726">
    <property type="entry name" value="Ribosomal_uL2_dom3"/>
</dbReference>
<dbReference type="InterPro" id="IPR022666">
    <property type="entry name" value="Ribosomal_uL2_RNA-bd_dom"/>
</dbReference>
<dbReference type="InterPro" id="IPR008991">
    <property type="entry name" value="Translation_prot_SH3-like_sf"/>
</dbReference>
<dbReference type="NCBIfam" id="TIGR01171">
    <property type="entry name" value="rplB_bact"/>
    <property type="match status" value="1"/>
</dbReference>
<dbReference type="PANTHER" id="PTHR13691:SF5">
    <property type="entry name" value="LARGE RIBOSOMAL SUBUNIT PROTEIN UL2M"/>
    <property type="match status" value="1"/>
</dbReference>
<dbReference type="PANTHER" id="PTHR13691">
    <property type="entry name" value="RIBOSOMAL PROTEIN L2"/>
    <property type="match status" value="1"/>
</dbReference>
<dbReference type="Pfam" id="PF00181">
    <property type="entry name" value="Ribosomal_L2"/>
    <property type="match status" value="1"/>
</dbReference>
<dbReference type="Pfam" id="PF03947">
    <property type="entry name" value="Ribosomal_L2_C"/>
    <property type="match status" value="1"/>
</dbReference>
<dbReference type="PIRSF" id="PIRSF002158">
    <property type="entry name" value="Ribosomal_L2"/>
    <property type="match status" value="1"/>
</dbReference>
<dbReference type="SMART" id="SM01383">
    <property type="entry name" value="Ribosomal_L2"/>
    <property type="match status" value="1"/>
</dbReference>
<dbReference type="SMART" id="SM01382">
    <property type="entry name" value="Ribosomal_L2_C"/>
    <property type="match status" value="1"/>
</dbReference>
<dbReference type="SUPFAM" id="SSF50249">
    <property type="entry name" value="Nucleic acid-binding proteins"/>
    <property type="match status" value="1"/>
</dbReference>
<dbReference type="SUPFAM" id="SSF50104">
    <property type="entry name" value="Translation proteins SH3-like domain"/>
    <property type="match status" value="1"/>
</dbReference>
<dbReference type="PROSITE" id="PS00467">
    <property type="entry name" value="RIBOSOMAL_L2"/>
    <property type="match status" value="1"/>
</dbReference>
<evidence type="ECO:0000255" key="1">
    <source>
        <dbReference type="HAMAP-Rule" id="MF_01320"/>
    </source>
</evidence>
<evidence type="ECO:0000256" key="2">
    <source>
        <dbReference type="SAM" id="MobiDB-lite"/>
    </source>
</evidence>
<evidence type="ECO:0000305" key="3"/>
<sequence>MALKHYNPTSPARRGLILVDKSGLHKGKPVKALTEGKRKSGGRNNQGHATARGIAGGHKQKYRIVDFKRRKWDQPATVERLEYDPNRSAFIALVKYEDGELAYILAPQRLAAGDVVLAAKKTDTKPGNAMEIGQAPVGTIVHNVEMKPGKGGQIARAAGTYVQIVGRDKGMVMVRLNSGEQRYIRSDCMCTVGAVSNPDNANQNLAKAGRNRWLGRRPLTRGVAKNPVDHPHGGGEGRTSGGRHPVTPWGKPTKGARTRHNKATDKFIIRSRHAKKKR</sequence>
<name>RL2_RHIWR</name>
<accession>A5V5Z9</accession>